<name>ATPF_ENTFA</name>
<keyword id="KW-0066">ATP synthesis</keyword>
<keyword id="KW-1003">Cell membrane</keyword>
<keyword id="KW-0138">CF(0)</keyword>
<keyword id="KW-0375">Hydrogen ion transport</keyword>
<keyword id="KW-0406">Ion transport</keyword>
<keyword id="KW-0472">Membrane</keyword>
<keyword id="KW-1185">Reference proteome</keyword>
<keyword id="KW-0812">Transmembrane</keyword>
<keyword id="KW-1133">Transmembrane helix</keyword>
<keyword id="KW-0813">Transport</keyword>
<accession>Q831A1</accession>
<gene>
    <name evidence="1" type="primary">atpF</name>
    <name type="ordered locus">EF_2612</name>
</gene>
<protein>
    <recommendedName>
        <fullName evidence="1">ATP synthase subunit b</fullName>
    </recommendedName>
    <alternativeName>
        <fullName evidence="1">ATP synthase F(0) sector subunit b</fullName>
    </alternativeName>
    <alternativeName>
        <fullName evidence="1">ATPase subunit I</fullName>
    </alternativeName>
    <alternativeName>
        <fullName evidence="1">F-type ATPase subunit b</fullName>
        <shortName evidence="1">F-ATPase subunit b</shortName>
    </alternativeName>
</protein>
<dbReference type="EMBL" id="AE016830">
    <property type="protein sequence ID" value="AAO82321.1"/>
    <property type="molecule type" value="Genomic_DNA"/>
</dbReference>
<dbReference type="RefSeq" id="NP_816251.1">
    <property type="nucleotide sequence ID" value="NC_004668.1"/>
</dbReference>
<dbReference type="RefSeq" id="WP_002365031.1">
    <property type="nucleotide sequence ID" value="NZ_KE136528.1"/>
</dbReference>
<dbReference type="SMR" id="Q831A1"/>
<dbReference type="STRING" id="226185.EF_2612"/>
<dbReference type="EnsemblBacteria" id="AAO82321">
    <property type="protein sequence ID" value="AAO82321"/>
    <property type="gene ID" value="EF_2612"/>
</dbReference>
<dbReference type="GeneID" id="60894614"/>
<dbReference type="KEGG" id="efa:EF2612"/>
<dbReference type="PATRIC" id="fig|226185.45.peg.944"/>
<dbReference type="eggNOG" id="COG0711">
    <property type="taxonomic scope" value="Bacteria"/>
</dbReference>
<dbReference type="HOGENOM" id="CLU_079215_4_2_9"/>
<dbReference type="Proteomes" id="UP000001415">
    <property type="component" value="Chromosome"/>
</dbReference>
<dbReference type="GO" id="GO:0005886">
    <property type="term" value="C:plasma membrane"/>
    <property type="evidence" value="ECO:0007669"/>
    <property type="project" value="UniProtKB-SubCell"/>
</dbReference>
<dbReference type="GO" id="GO:0045259">
    <property type="term" value="C:proton-transporting ATP synthase complex"/>
    <property type="evidence" value="ECO:0007669"/>
    <property type="project" value="UniProtKB-KW"/>
</dbReference>
<dbReference type="GO" id="GO:0046933">
    <property type="term" value="F:proton-transporting ATP synthase activity, rotational mechanism"/>
    <property type="evidence" value="ECO:0007669"/>
    <property type="project" value="UniProtKB-UniRule"/>
</dbReference>
<dbReference type="GO" id="GO:0046961">
    <property type="term" value="F:proton-transporting ATPase activity, rotational mechanism"/>
    <property type="evidence" value="ECO:0007669"/>
    <property type="project" value="TreeGrafter"/>
</dbReference>
<dbReference type="CDD" id="cd06503">
    <property type="entry name" value="ATP-synt_Fo_b"/>
    <property type="match status" value="1"/>
</dbReference>
<dbReference type="Gene3D" id="6.10.250.1580">
    <property type="match status" value="1"/>
</dbReference>
<dbReference type="HAMAP" id="MF_01398">
    <property type="entry name" value="ATP_synth_b_bprime"/>
    <property type="match status" value="1"/>
</dbReference>
<dbReference type="InterPro" id="IPR028987">
    <property type="entry name" value="ATP_synth_B-like_membr_sf"/>
</dbReference>
<dbReference type="InterPro" id="IPR002146">
    <property type="entry name" value="ATP_synth_b/b'su_bac/chlpt"/>
</dbReference>
<dbReference type="InterPro" id="IPR005864">
    <property type="entry name" value="ATP_synth_F0_bsu_bac"/>
</dbReference>
<dbReference type="InterPro" id="IPR050059">
    <property type="entry name" value="ATP_synthase_B_chain"/>
</dbReference>
<dbReference type="NCBIfam" id="TIGR01144">
    <property type="entry name" value="ATP_synt_b"/>
    <property type="match status" value="1"/>
</dbReference>
<dbReference type="PANTHER" id="PTHR33445:SF1">
    <property type="entry name" value="ATP SYNTHASE SUBUNIT B"/>
    <property type="match status" value="1"/>
</dbReference>
<dbReference type="PANTHER" id="PTHR33445">
    <property type="entry name" value="ATP SYNTHASE SUBUNIT B', CHLOROPLASTIC"/>
    <property type="match status" value="1"/>
</dbReference>
<dbReference type="Pfam" id="PF00430">
    <property type="entry name" value="ATP-synt_B"/>
    <property type="match status" value="1"/>
</dbReference>
<dbReference type="SUPFAM" id="SSF81573">
    <property type="entry name" value="F1F0 ATP synthase subunit B, membrane domain"/>
    <property type="match status" value="1"/>
</dbReference>
<feature type="chain" id="PRO_0000368469" description="ATP synthase subunit b">
    <location>
        <begin position="1"/>
        <end position="176"/>
    </location>
</feature>
<feature type="transmembrane region" description="Helical" evidence="1">
    <location>
        <begin position="14"/>
        <end position="34"/>
    </location>
</feature>
<comment type="function">
    <text evidence="1">F(1)F(0) ATP synthase produces ATP from ADP in the presence of a proton or sodium gradient. F-type ATPases consist of two structural domains, F(1) containing the extramembraneous catalytic core and F(0) containing the membrane proton channel, linked together by a central stalk and a peripheral stalk. During catalysis, ATP synthesis in the catalytic domain of F(1) is coupled via a rotary mechanism of the central stalk subunits to proton translocation.</text>
</comment>
<comment type="function">
    <text evidence="1">Component of the F(0) channel, it forms part of the peripheral stalk, linking F(1) to F(0).</text>
</comment>
<comment type="subunit">
    <text evidence="1">F-type ATPases have 2 components, F(1) - the catalytic core - and F(0) - the membrane proton channel. F(1) has five subunits: alpha(3), beta(3), gamma(1), delta(1), epsilon(1). F(0) has three main subunits: a(1), b(2) and c(10-14). The alpha and beta chains form an alternating ring which encloses part of the gamma chain. F(1) is attached to F(0) by a central stalk formed by the gamma and epsilon chains, while a peripheral stalk is formed by the delta and b chains.</text>
</comment>
<comment type="subcellular location">
    <subcellularLocation>
        <location evidence="1">Cell membrane</location>
        <topology evidence="1">Single-pass membrane protein</topology>
    </subcellularLocation>
</comment>
<comment type="similarity">
    <text evidence="1">Belongs to the ATPase B chain family.</text>
</comment>
<sequence>MLLTTLVVGETAPSTTLGTMIVVSGAFLILMLLLKKYAWGAIVDILTQREEKIANDLDSAEQSRVAAAKMEKERQQQLLSSRSEAAEIIKNAKESGEQTRQKTLKETTAEVTRLREKARTDISQEREEALSSVKNEVADLSLQIAAKILNKELTPDAHEALIDSYIESLGKANETR</sequence>
<proteinExistence type="inferred from homology"/>
<reference key="1">
    <citation type="journal article" date="2003" name="Science">
        <title>Role of mobile DNA in the evolution of vancomycin-resistant Enterococcus faecalis.</title>
        <authorList>
            <person name="Paulsen I.T."/>
            <person name="Banerjei L."/>
            <person name="Myers G.S.A."/>
            <person name="Nelson K.E."/>
            <person name="Seshadri R."/>
            <person name="Read T.D."/>
            <person name="Fouts D.E."/>
            <person name="Eisen J.A."/>
            <person name="Gill S.R."/>
            <person name="Heidelberg J.F."/>
            <person name="Tettelin H."/>
            <person name="Dodson R.J."/>
            <person name="Umayam L.A."/>
            <person name="Brinkac L.M."/>
            <person name="Beanan M.J."/>
            <person name="Daugherty S.C."/>
            <person name="DeBoy R.T."/>
            <person name="Durkin S.A."/>
            <person name="Kolonay J.F."/>
            <person name="Madupu R."/>
            <person name="Nelson W.C."/>
            <person name="Vamathevan J.J."/>
            <person name="Tran B."/>
            <person name="Upton J."/>
            <person name="Hansen T."/>
            <person name="Shetty J."/>
            <person name="Khouri H.M."/>
            <person name="Utterback T.R."/>
            <person name="Radune D."/>
            <person name="Ketchum K.A."/>
            <person name="Dougherty B.A."/>
            <person name="Fraser C.M."/>
        </authorList>
    </citation>
    <scope>NUCLEOTIDE SEQUENCE [LARGE SCALE GENOMIC DNA]</scope>
    <source>
        <strain>ATCC 700802 / V583</strain>
    </source>
</reference>
<evidence type="ECO:0000255" key="1">
    <source>
        <dbReference type="HAMAP-Rule" id="MF_01398"/>
    </source>
</evidence>
<organism>
    <name type="scientific">Enterococcus faecalis (strain ATCC 700802 / V583)</name>
    <dbReference type="NCBI Taxonomy" id="226185"/>
    <lineage>
        <taxon>Bacteria</taxon>
        <taxon>Bacillati</taxon>
        <taxon>Bacillota</taxon>
        <taxon>Bacilli</taxon>
        <taxon>Lactobacillales</taxon>
        <taxon>Enterococcaceae</taxon>
        <taxon>Enterococcus</taxon>
    </lineage>
</organism>